<accession>A5GAW1</accession>
<name>RL15_GEOUR</name>
<comment type="function">
    <text evidence="1">Binds to the 23S rRNA.</text>
</comment>
<comment type="subunit">
    <text evidence="1">Part of the 50S ribosomal subunit.</text>
</comment>
<comment type="similarity">
    <text evidence="1">Belongs to the universal ribosomal protein uL15 family.</text>
</comment>
<gene>
    <name evidence="1" type="primary">rplO</name>
    <name type="ordered locus">Gura_1085</name>
</gene>
<proteinExistence type="inferred from homology"/>
<sequence length="146" mass="15391">MELNSLKPAAGASKNRKRIGRGTGSGHGKTATKGHKGQKARSGGSIKAGFEGGQMPMHRRLPKRGFTPLAKKIYSVVNLSQLDVFETGSCVDIEAMQKSGLVKNVCDGIKILATGELTKALTVKAHKFSATARNKITSVGGTVEEI</sequence>
<evidence type="ECO:0000255" key="1">
    <source>
        <dbReference type="HAMAP-Rule" id="MF_01341"/>
    </source>
</evidence>
<evidence type="ECO:0000256" key="2">
    <source>
        <dbReference type="SAM" id="MobiDB-lite"/>
    </source>
</evidence>
<evidence type="ECO:0000305" key="3"/>
<dbReference type="EMBL" id="CP000698">
    <property type="protein sequence ID" value="ABQ25291.1"/>
    <property type="molecule type" value="Genomic_DNA"/>
</dbReference>
<dbReference type="RefSeq" id="WP_011938013.1">
    <property type="nucleotide sequence ID" value="NC_009483.1"/>
</dbReference>
<dbReference type="SMR" id="A5GAW1"/>
<dbReference type="STRING" id="351605.Gura_1085"/>
<dbReference type="KEGG" id="gur:Gura_1085"/>
<dbReference type="HOGENOM" id="CLU_055188_4_2_7"/>
<dbReference type="OrthoDB" id="9810293at2"/>
<dbReference type="Proteomes" id="UP000006695">
    <property type="component" value="Chromosome"/>
</dbReference>
<dbReference type="GO" id="GO:0022625">
    <property type="term" value="C:cytosolic large ribosomal subunit"/>
    <property type="evidence" value="ECO:0007669"/>
    <property type="project" value="TreeGrafter"/>
</dbReference>
<dbReference type="GO" id="GO:0019843">
    <property type="term" value="F:rRNA binding"/>
    <property type="evidence" value="ECO:0007669"/>
    <property type="project" value="UniProtKB-UniRule"/>
</dbReference>
<dbReference type="GO" id="GO:0003735">
    <property type="term" value="F:structural constituent of ribosome"/>
    <property type="evidence" value="ECO:0007669"/>
    <property type="project" value="InterPro"/>
</dbReference>
<dbReference type="GO" id="GO:0006412">
    <property type="term" value="P:translation"/>
    <property type="evidence" value="ECO:0007669"/>
    <property type="project" value="UniProtKB-UniRule"/>
</dbReference>
<dbReference type="Gene3D" id="3.100.10.10">
    <property type="match status" value="1"/>
</dbReference>
<dbReference type="HAMAP" id="MF_01341">
    <property type="entry name" value="Ribosomal_uL15"/>
    <property type="match status" value="1"/>
</dbReference>
<dbReference type="InterPro" id="IPR030878">
    <property type="entry name" value="Ribosomal_uL15"/>
</dbReference>
<dbReference type="InterPro" id="IPR021131">
    <property type="entry name" value="Ribosomal_uL15/eL18"/>
</dbReference>
<dbReference type="InterPro" id="IPR036227">
    <property type="entry name" value="Ribosomal_uL15/eL18_sf"/>
</dbReference>
<dbReference type="InterPro" id="IPR005749">
    <property type="entry name" value="Ribosomal_uL15_bac-type"/>
</dbReference>
<dbReference type="InterPro" id="IPR001196">
    <property type="entry name" value="Ribosomal_uL15_CS"/>
</dbReference>
<dbReference type="NCBIfam" id="TIGR01071">
    <property type="entry name" value="rplO_bact"/>
    <property type="match status" value="1"/>
</dbReference>
<dbReference type="PANTHER" id="PTHR12934">
    <property type="entry name" value="50S RIBOSOMAL PROTEIN L15"/>
    <property type="match status" value="1"/>
</dbReference>
<dbReference type="PANTHER" id="PTHR12934:SF11">
    <property type="entry name" value="LARGE RIBOSOMAL SUBUNIT PROTEIN UL15M"/>
    <property type="match status" value="1"/>
</dbReference>
<dbReference type="Pfam" id="PF00828">
    <property type="entry name" value="Ribosomal_L27A"/>
    <property type="match status" value="1"/>
</dbReference>
<dbReference type="SUPFAM" id="SSF52080">
    <property type="entry name" value="Ribosomal proteins L15p and L18e"/>
    <property type="match status" value="1"/>
</dbReference>
<dbReference type="PROSITE" id="PS00475">
    <property type="entry name" value="RIBOSOMAL_L15"/>
    <property type="match status" value="1"/>
</dbReference>
<keyword id="KW-1185">Reference proteome</keyword>
<keyword id="KW-0687">Ribonucleoprotein</keyword>
<keyword id="KW-0689">Ribosomal protein</keyword>
<keyword id="KW-0694">RNA-binding</keyword>
<keyword id="KW-0699">rRNA-binding</keyword>
<reference key="1">
    <citation type="submission" date="2007-05" db="EMBL/GenBank/DDBJ databases">
        <title>Complete sequence of Geobacter uraniireducens Rf4.</title>
        <authorList>
            <consortium name="US DOE Joint Genome Institute"/>
            <person name="Copeland A."/>
            <person name="Lucas S."/>
            <person name="Lapidus A."/>
            <person name="Barry K."/>
            <person name="Detter J.C."/>
            <person name="Glavina del Rio T."/>
            <person name="Hammon N."/>
            <person name="Israni S."/>
            <person name="Dalin E."/>
            <person name="Tice H."/>
            <person name="Pitluck S."/>
            <person name="Chertkov O."/>
            <person name="Brettin T."/>
            <person name="Bruce D."/>
            <person name="Han C."/>
            <person name="Schmutz J."/>
            <person name="Larimer F."/>
            <person name="Land M."/>
            <person name="Hauser L."/>
            <person name="Kyrpides N."/>
            <person name="Mikhailova N."/>
            <person name="Shelobolina E."/>
            <person name="Aklujkar M."/>
            <person name="Lovley D."/>
            <person name="Richardson P."/>
        </authorList>
    </citation>
    <scope>NUCLEOTIDE SEQUENCE [LARGE SCALE GENOMIC DNA]</scope>
    <source>
        <strain>ATCC BAA-1134 / JCM 13001 / Rf4</strain>
    </source>
</reference>
<organism>
    <name type="scientific">Geotalea uraniireducens (strain Rf4)</name>
    <name type="common">Geobacter uraniireducens</name>
    <dbReference type="NCBI Taxonomy" id="351605"/>
    <lineage>
        <taxon>Bacteria</taxon>
        <taxon>Pseudomonadati</taxon>
        <taxon>Thermodesulfobacteriota</taxon>
        <taxon>Desulfuromonadia</taxon>
        <taxon>Geobacterales</taxon>
        <taxon>Geobacteraceae</taxon>
        <taxon>Geotalea</taxon>
    </lineage>
</organism>
<protein>
    <recommendedName>
        <fullName evidence="1">Large ribosomal subunit protein uL15</fullName>
    </recommendedName>
    <alternativeName>
        <fullName evidence="3">50S ribosomal protein L15</fullName>
    </alternativeName>
</protein>
<feature type="chain" id="PRO_1000086715" description="Large ribosomal subunit protein uL15">
    <location>
        <begin position="1"/>
        <end position="146"/>
    </location>
</feature>
<feature type="region of interest" description="Disordered" evidence="2">
    <location>
        <begin position="1"/>
        <end position="61"/>
    </location>
</feature>
<feature type="compositionally biased region" description="Basic residues" evidence="2">
    <location>
        <begin position="30"/>
        <end position="39"/>
    </location>
</feature>